<evidence type="ECO:0000250" key="1">
    <source>
        <dbReference type="UniProtKB" id="P01040"/>
    </source>
</evidence>
<evidence type="ECO:0000255" key="2"/>
<evidence type="ECO:0000255" key="3">
    <source>
        <dbReference type="PROSITE-ProRule" id="PRU00498"/>
    </source>
</evidence>
<evidence type="ECO:0000269" key="4">
    <source>
    </source>
</evidence>
<evidence type="ECO:0000269" key="5">
    <source>
    </source>
</evidence>
<evidence type="ECO:0000269" key="6">
    <source>
    </source>
</evidence>
<evidence type="ECO:0000303" key="7">
    <source>
    </source>
</evidence>
<evidence type="ECO:0000305" key="8"/>
<keyword id="KW-0325">Glycoprotein</keyword>
<keyword id="KW-0646">Protease inhibitor</keyword>
<keyword id="KW-1185">Reference proteome</keyword>
<keyword id="KW-0964">Secreted</keyword>
<keyword id="KW-0732">Signal</keyword>
<keyword id="KW-0789">Thiol protease inhibitor</keyword>
<keyword id="KW-0843">Virulence</keyword>
<comment type="function">
    <text evidence="4 5 6">Secreted effector that interacts with and inhibits the pathogenesis-related papain-like cysteine proteases C14, PIP1 and RCR3 of host plants (PubMed:17085509, PubMed:19171904, PubMed:20940351). Inhibition of host proteases by a pathogen extracellular protease inhibitor forms a specific type of defense-counterdefense mechanism between plants and microbial pathogens (PubMed:17085509, PubMed:19171904, PubMed:20940351).</text>
</comment>
<comment type="subunit">
    <text evidence="4 5 6">Interacts with the host papain-like cysteine protease PIP1 (PubMed:17085509). Interacts with the host papain-like cysteine protease RCR3 (PubMed:19171904). Interacts with the host papain-like cysteine protease C14 (PubMed:20940351).</text>
</comment>
<comment type="subcellular location">
    <subcellularLocation>
        <location evidence="4 5 6">Secreted</location>
    </subcellularLocation>
    <text evidence="4 5 6">Localizes to host apoplast where it targets defense proteases for inhibition.</text>
</comment>
<comment type="induction">
    <text evidence="4">Expression is up-regulated during infection of host tomato.</text>
</comment>
<comment type="similarity">
    <text evidence="8">Belongs to the cystatin family.</text>
</comment>
<name>EPI2B_PHYIT</name>
<gene>
    <name evidence="7" type="primary">EPIC2B</name>
    <name type="ORF">PITG_09173</name>
</gene>
<reference key="1">
    <citation type="journal article" date="2009" name="Nature">
        <title>Genome sequence and analysis of the Irish potato famine pathogen Phytophthora infestans.</title>
        <authorList>
            <consortium name="The Broad Institute Genome Sequencing Platform"/>
            <person name="Haas B.J."/>
            <person name="Kamoun S."/>
            <person name="Zody M.C."/>
            <person name="Jiang R.H."/>
            <person name="Handsaker R.E."/>
            <person name="Cano L.M."/>
            <person name="Grabherr M."/>
            <person name="Kodira C.D."/>
            <person name="Raffaele S."/>
            <person name="Torto-Alalibo T."/>
            <person name="Bozkurt T.O."/>
            <person name="Ah-Fong A.M."/>
            <person name="Alvarado L."/>
            <person name="Anderson V.L."/>
            <person name="Armstrong M.R."/>
            <person name="Avrova A."/>
            <person name="Baxter L."/>
            <person name="Beynon J."/>
            <person name="Boevink P.C."/>
            <person name="Bollmann S.R."/>
            <person name="Bos J.I."/>
            <person name="Bulone V."/>
            <person name="Cai G."/>
            <person name="Cakir C."/>
            <person name="Carrington J.C."/>
            <person name="Chawner M."/>
            <person name="Conti L."/>
            <person name="Costanzo S."/>
            <person name="Ewan R."/>
            <person name="Fahlgren N."/>
            <person name="Fischbach M.A."/>
            <person name="Fugelstad J."/>
            <person name="Gilroy E.M."/>
            <person name="Gnerre S."/>
            <person name="Green P.J."/>
            <person name="Grenville-Briggs L.J."/>
            <person name="Griffith J."/>
            <person name="Grunwald N.J."/>
            <person name="Horn K."/>
            <person name="Horner N.R."/>
            <person name="Hu C.H."/>
            <person name="Huitema E."/>
            <person name="Jeong D.H."/>
            <person name="Jones A.M."/>
            <person name="Jones J.D."/>
            <person name="Jones R.W."/>
            <person name="Karlsson E.K."/>
            <person name="Kunjeti S.G."/>
            <person name="Lamour K."/>
            <person name="Liu Z."/>
            <person name="Ma L."/>
            <person name="Maclean D."/>
            <person name="Chibucos M.C."/>
            <person name="McDonald H."/>
            <person name="McWalters J."/>
            <person name="Meijer H.J."/>
            <person name="Morgan W."/>
            <person name="Morris P.F."/>
            <person name="Munro C.A."/>
            <person name="O'Neill K."/>
            <person name="Ospina-Giraldo M."/>
            <person name="Pinzon A."/>
            <person name="Pritchard L."/>
            <person name="Ramsahoye B."/>
            <person name="Ren Q."/>
            <person name="Restrepo S."/>
            <person name="Roy S."/>
            <person name="Sadanandom A."/>
            <person name="Savidor A."/>
            <person name="Schornack S."/>
            <person name="Schwartz D.C."/>
            <person name="Schumann U.D."/>
            <person name="Schwessinger B."/>
            <person name="Seyer L."/>
            <person name="Sharpe T."/>
            <person name="Silvar C."/>
            <person name="Song J."/>
            <person name="Studholme D.J."/>
            <person name="Sykes S."/>
            <person name="Thines M."/>
            <person name="van de Vondervoort P.J."/>
            <person name="Phuntumart V."/>
            <person name="Wawra S."/>
            <person name="Weide R."/>
            <person name="Win J."/>
            <person name="Young C."/>
            <person name="Zhou S."/>
            <person name="Fry W."/>
            <person name="Meyers B.C."/>
            <person name="van West P."/>
            <person name="Ristaino J."/>
            <person name="Govers F."/>
            <person name="Birch P.R."/>
            <person name="Whisson S.C."/>
            <person name="Judelson H.S."/>
            <person name="Nusbaum C."/>
        </authorList>
    </citation>
    <scope>NUCLEOTIDE SEQUENCE [LARGE SCALE GENOMIC DNA]</scope>
    <source>
        <strain>T30-4</strain>
    </source>
</reference>
<reference key="2">
    <citation type="journal article" date="2007" name="Plant Physiol.">
        <title>A Phytophthora infestans cystatin-like protein targets a novel tomato papain-like apoplastic protease.</title>
        <authorList>
            <person name="Tian M."/>
            <person name="Win J."/>
            <person name="Song J."/>
            <person name="van der Hoorn R."/>
            <person name="van der Knaap E."/>
            <person name="Kamoun S."/>
        </authorList>
    </citation>
    <scope>INDUCTION</scope>
    <scope>FUNCTION</scope>
    <scope>SUBCELLULAR LOCATION</scope>
    <scope>INTERACTION WITH HOST PIP1</scope>
</reference>
<reference key="3">
    <citation type="journal article" date="2009" name="Proc. Natl. Acad. Sci. U.S.A.">
        <title>Apoplastic effectors secreted by two unrelated eukaryotic plant pathogens target the tomato defense protease Rcr3.</title>
        <authorList>
            <person name="Song J."/>
            <person name="Win J."/>
            <person name="Tian M."/>
            <person name="Schornack S."/>
            <person name="Kaschani F."/>
            <person name="Ilyas M."/>
            <person name="van der Hoorn R.A."/>
            <person name="Kamoun S."/>
        </authorList>
    </citation>
    <scope>FUNCTION</scope>
    <scope>SUBCELLULAR LOCATION</scope>
    <scope>INTERACTION WITH HOST RCR3</scope>
</reference>
<reference key="4">
    <citation type="journal article" date="2010" name="Plant Physiol.">
        <title>An effector-targeted protease contributes to defense against Phytophthora infestans and is under diversifying selection in natural hosts.</title>
        <authorList>
            <person name="Kaschani F."/>
            <person name="Shabab M."/>
            <person name="Bozkurt T."/>
            <person name="Shindo T."/>
            <person name="Schornack S."/>
            <person name="Gu C."/>
            <person name="Ilyas M."/>
            <person name="Win J."/>
            <person name="Kamoun S."/>
            <person name="van der Hoorn R.A."/>
        </authorList>
    </citation>
    <scope>FUNCTION</scope>
    <scope>SUBCELLULAR LOCATION</scope>
    <scope>INTERACTION WITH HOST C14</scope>
</reference>
<feature type="signal peptide" evidence="2">
    <location>
        <begin position="1"/>
        <end position="21"/>
    </location>
</feature>
<feature type="chain" id="PRO_5003013178" description="Cystatin-like cysteine protease inhibitor EPIC2B">
    <location>
        <begin position="22"/>
        <end position="125"/>
    </location>
</feature>
<feature type="short sequence motif" description="Secondary area of contact" evidence="1">
    <location>
        <begin position="68"/>
        <end position="72"/>
    </location>
</feature>
<feature type="site" description="Reactive site" evidence="1">
    <location>
        <position position="25"/>
    </location>
</feature>
<feature type="glycosylation site" description="N-linked (GlcNAc...) asparagine" evidence="3">
    <location>
        <position position="45"/>
    </location>
</feature>
<dbReference type="EMBL" id="DS028131">
    <property type="protein sequence ID" value="EEY55258.1"/>
    <property type="molecule type" value="Genomic_DNA"/>
</dbReference>
<dbReference type="RefSeq" id="XP_002903482.1">
    <property type="nucleotide sequence ID" value="XM_002903436.1"/>
</dbReference>
<dbReference type="SMR" id="D0NBV3"/>
<dbReference type="STRING" id="403677.D0NBV3"/>
<dbReference type="MEROPS" id="I25.048"/>
<dbReference type="GlyCosmos" id="D0NBV3">
    <property type="glycosylation" value="1 site, No reported glycans"/>
</dbReference>
<dbReference type="EnsemblProtists" id="PITG_09173T0">
    <property type="protein sequence ID" value="PITG_09173T0"/>
    <property type="gene ID" value="PITG_09173"/>
</dbReference>
<dbReference type="GeneID" id="9470509"/>
<dbReference type="KEGG" id="pif:PITG_09173"/>
<dbReference type="VEuPathDB" id="FungiDB:PITG_09173"/>
<dbReference type="eggNOG" id="ENOG502RGHP">
    <property type="taxonomic scope" value="Eukaryota"/>
</dbReference>
<dbReference type="HOGENOM" id="CLU_117422_0_0_1"/>
<dbReference type="InParanoid" id="D0NBV3"/>
<dbReference type="OMA" id="FRVKGCA"/>
<dbReference type="OrthoDB" id="164262at2759"/>
<dbReference type="PHI-base" id="PHI:6287"/>
<dbReference type="Proteomes" id="UP000006643">
    <property type="component" value="Partially assembled WGS sequence"/>
</dbReference>
<dbReference type="GO" id="GO:0005576">
    <property type="term" value="C:extracellular region"/>
    <property type="evidence" value="ECO:0007669"/>
    <property type="project" value="UniProtKB-SubCell"/>
</dbReference>
<dbReference type="GO" id="GO:0004869">
    <property type="term" value="F:cysteine-type endopeptidase inhibitor activity"/>
    <property type="evidence" value="ECO:0007669"/>
    <property type="project" value="UniProtKB-KW"/>
</dbReference>
<dbReference type="GO" id="GO:0030414">
    <property type="term" value="F:peptidase inhibitor activity"/>
    <property type="evidence" value="ECO:0000314"/>
    <property type="project" value="UniProtKB"/>
</dbReference>
<dbReference type="GO" id="GO:0052170">
    <property type="term" value="P:symbiont-mediated suppression of host innate immune response"/>
    <property type="evidence" value="ECO:0000303"/>
    <property type="project" value="GO_Central"/>
</dbReference>
<dbReference type="CDD" id="cd00042">
    <property type="entry name" value="CY"/>
    <property type="match status" value="1"/>
</dbReference>
<dbReference type="Gene3D" id="3.10.450.10">
    <property type="match status" value="1"/>
</dbReference>
<dbReference type="InterPro" id="IPR000010">
    <property type="entry name" value="Cystatin_dom"/>
</dbReference>
<dbReference type="InterPro" id="IPR046350">
    <property type="entry name" value="Cystatin_sf"/>
</dbReference>
<dbReference type="SUPFAM" id="SSF54403">
    <property type="entry name" value="Cystatin/monellin"/>
    <property type="match status" value="1"/>
</dbReference>
<dbReference type="PROSITE" id="PS00287">
    <property type="entry name" value="CYSTATIN"/>
    <property type="match status" value="1"/>
</dbReference>
<proteinExistence type="evidence at protein level"/>
<protein>
    <recommendedName>
        <fullName evidence="7">Cystatin-like cysteine protease inhibitor EPIC2B</fullName>
    </recommendedName>
    <alternativeName>
        <fullName evidence="7">Extracellular protease inhibitor with cystatin-like domain protein 2B</fullName>
    </alternativeName>
    <alternativeName>
        <fullName evidence="7">Secreted effector EPIC2B</fullName>
    </alternativeName>
</protein>
<organism>
    <name type="scientific">Phytophthora infestans (strain T30-4)</name>
    <name type="common">Potato late blight agent</name>
    <dbReference type="NCBI Taxonomy" id="403677"/>
    <lineage>
        <taxon>Eukaryota</taxon>
        <taxon>Sar</taxon>
        <taxon>Stramenopiles</taxon>
        <taxon>Oomycota</taxon>
        <taxon>Peronosporales</taxon>
        <taxon>Peronosporaceae</taxon>
        <taxon>Phytophthora</taxon>
    </lineage>
</organism>
<accession>D0NBV3</accession>
<sequence>MSFLRPTLALLAVTALVTTSAQLNGYSKKEVTPEDTELLQKAQSNVSAYNSDVTSRICYLKVDSLETQVVSGENYKFHVSGCSVNSDKELGGCANQNCESSKYDIVIYSQSWTNTLKVTSITPAN</sequence>